<gene>
    <name evidence="1" type="primary">trpD</name>
    <name type="ordered locus">Bmul_2862</name>
    <name type="ordered locus">BMULJ_00371</name>
</gene>
<name>TRPD_BURM1</name>
<feature type="chain" id="PRO_0000154440" description="Anthranilate phosphoribosyltransferase">
    <location>
        <begin position="1"/>
        <end position="343"/>
    </location>
</feature>
<feature type="binding site" evidence="1">
    <location>
        <position position="84"/>
    </location>
    <ligand>
        <name>5-phospho-alpha-D-ribose 1-diphosphate</name>
        <dbReference type="ChEBI" id="CHEBI:58017"/>
    </ligand>
</feature>
<feature type="binding site" evidence="1">
    <location>
        <position position="84"/>
    </location>
    <ligand>
        <name>anthranilate</name>
        <dbReference type="ChEBI" id="CHEBI:16567"/>
        <label>1</label>
    </ligand>
</feature>
<feature type="binding site" evidence="1">
    <location>
        <begin position="87"/>
        <end position="88"/>
    </location>
    <ligand>
        <name>5-phospho-alpha-D-ribose 1-diphosphate</name>
        <dbReference type="ChEBI" id="CHEBI:58017"/>
    </ligand>
</feature>
<feature type="binding site" evidence="1">
    <location>
        <position position="92"/>
    </location>
    <ligand>
        <name>5-phospho-alpha-D-ribose 1-diphosphate</name>
        <dbReference type="ChEBI" id="CHEBI:58017"/>
    </ligand>
</feature>
<feature type="binding site" evidence="1">
    <location>
        <begin position="94"/>
        <end position="97"/>
    </location>
    <ligand>
        <name>5-phospho-alpha-D-ribose 1-diphosphate</name>
        <dbReference type="ChEBI" id="CHEBI:58017"/>
    </ligand>
</feature>
<feature type="binding site" evidence="1">
    <location>
        <position position="96"/>
    </location>
    <ligand>
        <name>Mg(2+)</name>
        <dbReference type="ChEBI" id="CHEBI:18420"/>
        <label>1</label>
    </ligand>
</feature>
<feature type="binding site" evidence="1">
    <location>
        <begin position="112"/>
        <end position="120"/>
    </location>
    <ligand>
        <name>5-phospho-alpha-D-ribose 1-diphosphate</name>
        <dbReference type="ChEBI" id="CHEBI:58017"/>
    </ligand>
</feature>
<feature type="binding site" evidence="1">
    <location>
        <position position="115"/>
    </location>
    <ligand>
        <name>anthranilate</name>
        <dbReference type="ChEBI" id="CHEBI:16567"/>
        <label>1</label>
    </ligand>
</feature>
<feature type="binding site" evidence="1">
    <location>
        <position position="124"/>
    </location>
    <ligand>
        <name>5-phospho-alpha-D-ribose 1-diphosphate</name>
        <dbReference type="ChEBI" id="CHEBI:58017"/>
    </ligand>
</feature>
<feature type="binding site" evidence="1">
    <location>
        <position position="170"/>
    </location>
    <ligand>
        <name>anthranilate</name>
        <dbReference type="ChEBI" id="CHEBI:16567"/>
        <label>2</label>
    </ligand>
</feature>
<feature type="binding site" evidence="1">
    <location>
        <position position="229"/>
    </location>
    <ligand>
        <name>Mg(2+)</name>
        <dbReference type="ChEBI" id="CHEBI:18420"/>
        <label>2</label>
    </ligand>
</feature>
<feature type="binding site" evidence="1">
    <location>
        <position position="230"/>
    </location>
    <ligand>
        <name>Mg(2+)</name>
        <dbReference type="ChEBI" id="CHEBI:18420"/>
        <label>1</label>
    </ligand>
</feature>
<feature type="binding site" evidence="1">
    <location>
        <position position="230"/>
    </location>
    <ligand>
        <name>Mg(2+)</name>
        <dbReference type="ChEBI" id="CHEBI:18420"/>
        <label>2</label>
    </ligand>
</feature>
<reference key="1">
    <citation type="journal article" date="2003" name="J. Bacteriol.">
        <title>Distribution and organization of auxotrophic genes on the multichromosomal genome of Burkholderia multivorans ATCC 17616.</title>
        <authorList>
            <person name="Komatsu H."/>
            <person name="Imura Y."/>
            <person name="Ohori A."/>
            <person name="Nagata Y."/>
            <person name="Tsuda M."/>
        </authorList>
    </citation>
    <scope>NUCLEOTIDE SEQUENCE [GENOMIC DNA]</scope>
</reference>
<reference key="2">
    <citation type="submission" date="2007-10" db="EMBL/GenBank/DDBJ databases">
        <title>Complete sequence of chromosome 1 of Burkholderia multivorans ATCC 17616.</title>
        <authorList>
            <person name="Copeland A."/>
            <person name="Lucas S."/>
            <person name="Lapidus A."/>
            <person name="Barry K."/>
            <person name="Glavina del Rio T."/>
            <person name="Dalin E."/>
            <person name="Tice H."/>
            <person name="Pitluck S."/>
            <person name="Chain P."/>
            <person name="Malfatti S."/>
            <person name="Shin M."/>
            <person name="Vergez L."/>
            <person name="Schmutz J."/>
            <person name="Larimer F."/>
            <person name="Land M."/>
            <person name="Hauser L."/>
            <person name="Kyrpides N."/>
            <person name="Kim E."/>
            <person name="Tiedje J."/>
            <person name="Richardson P."/>
        </authorList>
    </citation>
    <scope>NUCLEOTIDE SEQUENCE [LARGE SCALE GENOMIC DNA]</scope>
    <source>
        <strain>ATCC 17616 / 249</strain>
    </source>
</reference>
<reference key="3">
    <citation type="submission" date="2007-04" db="EMBL/GenBank/DDBJ databases">
        <title>Complete genome sequence of Burkholderia multivorans ATCC 17616.</title>
        <authorList>
            <person name="Ohtsubo Y."/>
            <person name="Yamashita A."/>
            <person name="Kurokawa K."/>
            <person name="Takami H."/>
            <person name="Yuhara S."/>
            <person name="Nishiyama E."/>
            <person name="Endo R."/>
            <person name="Miyazaki R."/>
            <person name="Ono A."/>
            <person name="Yano K."/>
            <person name="Ito M."/>
            <person name="Sota M."/>
            <person name="Yuji N."/>
            <person name="Hattori M."/>
            <person name="Tsuda M."/>
        </authorList>
    </citation>
    <scope>NUCLEOTIDE SEQUENCE [LARGE SCALE GENOMIC DNA]</scope>
    <source>
        <strain>ATCC 17616 / 249</strain>
    </source>
</reference>
<organism>
    <name type="scientific">Burkholderia multivorans (strain ATCC 17616 / 249)</name>
    <dbReference type="NCBI Taxonomy" id="395019"/>
    <lineage>
        <taxon>Bacteria</taxon>
        <taxon>Pseudomonadati</taxon>
        <taxon>Pseudomonadota</taxon>
        <taxon>Betaproteobacteria</taxon>
        <taxon>Burkholderiales</taxon>
        <taxon>Burkholderiaceae</taxon>
        <taxon>Burkholderia</taxon>
        <taxon>Burkholderia cepacia complex</taxon>
    </lineage>
</organism>
<proteinExistence type="inferred from homology"/>
<comment type="function">
    <text evidence="1">Catalyzes the transfer of the phosphoribosyl group of 5-phosphorylribose-1-pyrophosphate (PRPP) to anthranilate to yield N-(5'-phosphoribosyl)-anthranilate (PRA).</text>
</comment>
<comment type="catalytic activity">
    <reaction evidence="1">
        <text>N-(5-phospho-beta-D-ribosyl)anthranilate + diphosphate = 5-phospho-alpha-D-ribose 1-diphosphate + anthranilate</text>
        <dbReference type="Rhea" id="RHEA:11768"/>
        <dbReference type="ChEBI" id="CHEBI:16567"/>
        <dbReference type="ChEBI" id="CHEBI:18277"/>
        <dbReference type="ChEBI" id="CHEBI:33019"/>
        <dbReference type="ChEBI" id="CHEBI:58017"/>
        <dbReference type="EC" id="2.4.2.18"/>
    </reaction>
</comment>
<comment type="cofactor">
    <cofactor evidence="1">
        <name>Mg(2+)</name>
        <dbReference type="ChEBI" id="CHEBI:18420"/>
    </cofactor>
    <text evidence="1">Binds 2 magnesium ions per monomer.</text>
</comment>
<comment type="pathway">
    <text evidence="1">Amino-acid biosynthesis; L-tryptophan biosynthesis; L-tryptophan from chorismate: step 2/5.</text>
</comment>
<comment type="subunit">
    <text evidence="1">Homodimer.</text>
</comment>
<comment type="similarity">
    <text evidence="1">Belongs to the anthranilate phosphoribosyltransferase family.</text>
</comment>
<protein>
    <recommendedName>
        <fullName evidence="1">Anthranilate phosphoribosyltransferase</fullName>
        <ecNumber evidence="1">2.4.2.18</ecNumber>
    </recommendedName>
</protein>
<keyword id="KW-0028">Amino-acid biosynthesis</keyword>
<keyword id="KW-0057">Aromatic amino acid biosynthesis</keyword>
<keyword id="KW-0328">Glycosyltransferase</keyword>
<keyword id="KW-0460">Magnesium</keyword>
<keyword id="KW-0479">Metal-binding</keyword>
<keyword id="KW-1185">Reference proteome</keyword>
<keyword id="KW-0808">Transferase</keyword>
<keyword id="KW-0822">Tryptophan biosynthesis</keyword>
<accession>Q845X9</accession>
<accession>A9AJ42</accession>
<dbReference type="EC" id="2.4.2.18" evidence="1"/>
<dbReference type="EMBL" id="AB091305">
    <property type="protein sequence ID" value="BAC65124.1"/>
    <property type="molecule type" value="Genomic_DNA"/>
</dbReference>
<dbReference type="EMBL" id="CP000868">
    <property type="protein sequence ID" value="ABX16546.1"/>
    <property type="molecule type" value="Genomic_DNA"/>
</dbReference>
<dbReference type="EMBL" id="AP009385">
    <property type="protein sequence ID" value="BAG42344.1"/>
    <property type="molecule type" value="Genomic_DNA"/>
</dbReference>
<dbReference type="RefSeq" id="WP_006400470.1">
    <property type="nucleotide sequence ID" value="NC_010804.1"/>
</dbReference>
<dbReference type="SMR" id="Q845X9"/>
<dbReference type="STRING" id="395019.BMULJ_00371"/>
<dbReference type="GeneID" id="89568808"/>
<dbReference type="KEGG" id="bmj:BMULJ_00371"/>
<dbReference type="KEGG" id="bmu:Bmul_2862"/>
<dbReference type="eggNOG" id="COG0547">
    <property type="taxonomic scope" value="Bacteria"/>
</dbReference>
<dbReference type="HOGENOM" id="CLU_034315_2_1_4"/>
<dbReference type="UniPathway" id="UPA00035">
    <property type="reaction ID" value="UER00041"/>
</dbReference>
<dbReference type="Proteomes" id="UP000008815">
    <property type="component" value="Chromosome 1"/>
</dbReference>
<dbReference type="GO" id="GO:0005829">
    <property type="term" value="C:cytosol"/>
    <property type="evidence" value="ECO:0007669"/>
    <property type="project" value="TreeGrafter"/>
</dbReference>
<dbReference type="GO" id="GO:0004048">
    <property type="term" value="F:anthranilate phosphoribosyltransferase activity"/>
    <property type="evidence" value="ECO:0007669"/>
    <property type="project" value="UniProtKB-UniRule"/>
</dbReference>
<dbReference type="GO" id="GO:0000287">
    <property type="term" value="F:magnesium ion binding"/>
    <property type="evidence" value="ECO:0007669"/>
    <property type="project" value="UniProtKB-UniRule"/>
</dbReference>
<dbReference type="GO" id="GO:0000162">
    <property type="term" value="P:L-tryptophan biosynthetic process"/>
    <property type="evidence" value="ECO:0007669"/>
    <property type="project" value="UniProtKB-UniRule"/>
</dbReference>
<dbReference type="FunFam" id="1.20.970.10:FF:000006">
    <property type="entry name" value="Anthranilate phosphoribosyltransferase"/>
    <property type="match status" value="1"/>
</dbReference>
<dbReference type="FunFam" id="3.40.1030.10:FF:000002">
    <property type="entry name" value="Anthranilate phosphoribosyltransferase"/>
    <property type="match status" value="1"/>
</dbReference>
<dbReference type="Gene3D" id="3.40.1030.10">
    <property type="entry name" value="Nucleoside phosphorylase/phosphoribosyltransferase catalytic domain"/>
    <property type="match status" value="1"/>
</dbReference>
<dbReference type="Gene3D" id="1.20.970.10">
    <property type="entry name" value="Transferase, Pyrimidine Nucleoside Phosphorylase, Chain C"/>
    <property type="match status" value="1"/>
</dbReference>
<dbReference type="HAMAP" id="MF_00211">
    <property type="entry name" value="TrpD"/>
    <property type="match status" value="1"/>
</dbReference>
<dbReference type="InterPro" id="IPR005940">
    <property type="entry name" value="Anthranilate_Pribosyl_Tfrase"/>
</dbReference>
<dbReference type="InterPro" id="IPR000312">
    <property type="entry name" value="Glycosyl_Trfase_fam3"/>
</dbReference>
<dbReference type="InterPro" id="IPR017459">
    <property type="entry name" value="Glycosyl_Trfase_fam3_N_dom"/>
</dbReference>
<dbReference type="InterPro" id="IPR036320">
    <property type="entry name" value="Glycosyl_Trfase_fam3_N_dom_sf"/>
</dbReference>
<dbReference type="InterPro" id="IPR035902">
    <property type="entry name" value="Nuc_phospho_transferase"/>
</dbReference>
<dbReference type="NCBIfam" id="TIGR01245">
    <property type="entry name" value="trpD"/>
    <property type="match status" value="1"/>
</dbReference>
<dbReference type="PANTHER" id="PTHR43285">
    <property type="entry name" value="ANTHRANILATE PHOSPHORIBOSYLTRANSFERASE"/>
    <property type="match status" value="1"/>
</dbReference>
<dbReference type="PANTHER" id="PTHR43285:SF2">
    <property type="entry name" value="ANTHRANILATE PHOSPHORIBOSYLTRANSFERASE"/>
    <property type="match status" value="1"/>
</dbReference>
<dbReference type="Pfam" id="PF02885">
    <property type="entry name" value="Glycos_trans_3N"/>
    <property type="match status" value="1"/>
</dbReference>
<dbReference type="Pfam" id="PF00591">
    <property type="entry name" value="Glycos_transf_3"/>
    <property type="match status" value="1"/>
</dbReference>
<dbReference type="SUPFAM" id="SSF52418">
    <property type="entry name" value="Nucleoside phosphorylase/phosphoribosyltransferase catalytic domain"/>
    <property type="match status" value="1"/>
</dbReference>
<dbReference type="SUPFAM" id="SSF47648">
    <property type="entry name" value="Nucleoside phosphorylase/phosphoribosyltransferase N-terminal domain"/>
    <property type="match status" value="1"/>
</dbReference>
<evidence type="ECO:0000255" key="1">
    <source>
        <dbReference type="HAMAP-Rule" id="MF_00211"/>
    </source>
</evidence>
<sequence length="343" mass="36733">MTITPQEALQRTIEHREIFHDEMLHLMRLIMRGDMSPVMAAAIITGLRVKKETIGEIAAAATVMREFANHVEVQDNSNFVDIVGTGGDGSHTFNISTASMFVTAAAGAKVAKHGNRGVSSKSGSADVLEALGVNIDLQPDQVAASIAETGMGFMFAPNHHPAMKNIAAVRRELGVRTIFNILGPLTNPAGAPNQLMGVFHPDLVGIQVRVMQRLGAQHVLVVYGKDGMDEVSLGAATLVGELRDGQVHEYEIHPEDFGLQMVSNRTLKVENAEESRAMLLGALDNQPGVAREIVTLNAGTALYAANVAGSIADGIQLAREAIASGKARAKVDELVRFTQQFKR</sequence>